<comment type="function">
    <text evidence="4">Phosphodiesterase (PDE) that catalyzes the hydrolysis of cyclic-di-GMP (c-di-GMP) to 5'-pGpG. Truncated proteins consisting of the GGDEF/EAL domains (residues 319-747) or of the EAL domain alone (481-747) have c-di-GMP phosphodiesterase activity. They do not have diguanylate cyclase activity. Cyclic-di-GMP is a second messenger which controls cell surface-associated traits in bacteria.</text>
</comment>
<comment type="catalytic activity">
    <reaction evidence="4">
        <text>3',3'-c-di-GMP + H2O = 5'-phosphoguanylyl(3'-&gt;5')guanosine + H(+)</text>
        <dbReference type="Rhea" id="RHEA:24902"/>
        <dbReference type="ChEBI" id="CHEBI:15377"/>
        <dbReference type="ChEBI" id="CHEBI:15378"/>
        <dbReference type="ChEBI" id="CHEBI:58754"/>
        <dbReference type="ChEBI" id="CHEBI:58805"/>
        <dbReference type="EC" id="3.1.4.52"/>
    </reaction>
</comment>
<comment type="cofactor">
    <cofactor evidence="4">
        <name>Mg(2+)</name>
        <dbReference type="ChEBI" id="CHEBI:18420"/>
    </cofactor>
    <cofactor evidence="4">
        <name>Mn(2+)</name>
        <dbReference type="ChEBI" id="CHEBI:29035"/>
    </cofactor>
    <text evidence="4">Mg(2+), and possibly also Mn(2+).</text>
</comment>
<comment type="activity regulation">
    <text evidence="4">Inhibited by pGpG.</text>
</comment>
<comment type="biophysicochemical properties">
    <phDependence>
        <text evidence="4">Optimum pH is 7.5 for the truncated enzyme.</text>
    </phDependence>
</comment>
<comment type="subcellular location">
    <subcellularLocation>
        <location evidence="3">Cell inner membrane</location>
        <topology evidence="1">Multi-pass membrane protein</topology>
    </subcellularLocation>
</comment>
<comment type="induction">
    <text evidence="4">Induced by FNR. Expression is highest under anaerobic conditions at 28 degrees Celsius in stationary phase.</text>
</comment>
<comment type="disruption phenotype">
    <text evidence="4">Increased biofilm formation but a decreased tendency to sediment and aggregate. Cells are more sensitive to peroxide.</text>
</comment>
<keyword id="KW-0973">c-di-GMP</keyword>
<keyword id="KW-0997">Cell inner membrane</keyword>
<keyword id="KW-1003">Cell membrane</keyword>
<keyword id="KW-0378">Hydrolase</keyword>
<keyword id="KW-0472">Membrane</keyword>
<keyword id="KW-0547">Nucleotide-binding</keyword>
<keyword id="KW-1185">Reference proteome</keyword>
<keyword id="KW-0812">Transmembrane</keyword>
<keyword id="KW-1133">Transmembrane helix</keyword>
<gene>
    <name evidence="5" type="primary">pdeF</name>
    <name type="synonym">yfgF</name>
    <name type="ordered locus">b2503</name>
    <name type="ordered locus">JW2488</name>
</gene>
<protein>
    <recommendedName>
        <fullName evidence="6">Cyclic di-GMP phosphodiesterase PdeF</fullName>
        <ecNumber evidence="4">3.1.4.52</ecNumber>
    </recommendedName>
</protein>
<accession>P77172</accession>
<reference key="1">
    <citation type="journal article" date="1997" name="DNA Res.">
        <title>Construction of a contiguous 874-kb sequence of the Escherichia coli-K12 genome corresponding to 50.0-68.8 min on the linkage map and analysis of its sequence features.</title>
        <authorList>
            <person name="Yamamoto Y."/>
            <person name="Aiba H."/>
            <person name="Baba T."/>
            <person name="Hayashi K."/>
            <person name="Inada T."/>
            <person name="Isono K."/>
            <person name="Itoh T."/>
            <person name="Kimura S."/>
            <person name="Kitagawa M."/>
            <person name="Makino K."/>
            <person name="Miki T."/>
            <person name="Mitsuhashi N."/>
            <person name="Mizobuchi K."/>
            <person name="Mori H."/>
            <person name="Nakade S."/>
            <person name="Nakamura Y."/>
            <person name="Nashimoto H."/>
            <person name="Oshima T."/>
            <person name="Oyama S."/>
            <person name="Saito N."/>
            <person name="Sampei G."/>
            <person name="Satoh Y."/>
            <person name="Sivasundaram S."/>
            <person name="Tagami H."/>
            <person name="Takahashi H."/>
            <person name="Takeda J."/>
            <person name="Takemoto K."/>
            <person name="Uehara K."/>
            <person name="Wada C."/>
            <person name="Yamagata S."/>
            <person name="Horiuchi T."/>
        </authorList>
    </citation>
    <scope>NUCLEOTIDE SEQUENCE [LARGE SCALE GENOMIC DNA]</scope>
    <source>
        <strain>K12 / W3110 / ATCC 27325 / DSM 5911</strain>
    </source>
</reference>
<reference key="2">
    <citation type="journal article" date="1997" name="Science">
        <title>The complete genome sequence of Escherichia coli K-12.</title>
        <authorList>
            <person name="Blattner F.R."/>
            <person name="Plunkett G. III"/>
            <person name="Bloch C.A."/>
            <person name="Perna N.T."/>
            <person name="Burland V."/>
            <person name="Riley M."/>
            <person name="Collado-Vides J."/>
            <person name="Glasner J.D."/>
            <person name="Rode C.K."/>
            <person name="Mayhew G.F."/>
            <person name="Gregor J."/>
            <person name="Davis N.W."/>
            <person name="Kirkpatrick H.A."/>
            <person name="Goeden M.A."/>
            <person name="Rose D.J."/>
            <person name="Mau B."/>
            <person name="Shao Y."/>
        </authorList>
    </citation>
    <scope>NUCLEOTIDE SEQUENCE [LARGE SCALE GENOMIC DNA]</scope>
    <source>
        <strain>K12 / MG1655 / ATCC 47076</strain>
    </source>
</reference>
<reference key="3">
    <citation type="journal article" date="2006" name="Mol. Syst. Biol.">
        <title>Highly accurate genome sequences of Escherichia coli K-12 strains MG1655 and W3110.</title>
        <authorList>
            <person name="Hayashi K."/>
            <person name="Morooka N."/>
            <person name="Yamamoto Y."/>
            <person name="Fujita K."/>
            <person name="Isono K."/>
            <person name="Choi S."/>
            <person name="Ohtsubo E."/>
            <person name="Baba T."/>
            <person name="Wanner B.L."/>
            <person name="Mori H."/>
            <person name="Horiuchi T."/>
        </authorList>
    </citation>
    <scope>NUCLEOTIDE SEQUENCE [LARGE SCALE GENOMIC DNA]</scope>
    <source>
        <strain>K12 / W3110 / ATCC 27325 / DSM 5911</strain>
    </source>
</reference>
<reference key="4">
    <citation type="journal article" date="2005" name="Science">
        <title>Global topology analysis of the Escherichia coli inner membrane proteome.</title>
        <authorList>
            <person name="Daley D.O."/>
            <person name="Rapp M."/>
            <person name="Granseth E."/>
            <person name="Melen K."/>
            <person name="Drew D."/>
            <person name="von Heijne G."/>
        </authorList>
    </citation>
    <scope>TOPOLOGY [LARGE SCALE ANALYSIS]</scope>
    <scope>SUBCELLULAR LOCATION</scope>
    <source>
        <strain>K12 / MG1655 / ATCC 47076</strain>
    </source>
</reference>
<reference key="5">
    <citation type="journal article" date="2010" name="Microbiology">
        <title>Escherichia coli K-12 YfgF is an anaerobic cyclic di-GMP phosphodiesterase with roles in cell surface remodelling and the oxidative stress response.</title>
        <authorList>
            <person name="Lacey M.M."/>
            <person name="Partridge J.D."/>
            <person name="Green J."/>
        </authorList>
    </citation>
    <scope>CHARACTERIZATION AS A C-DI-GMP PHOSPHODIESTERASE</scope>
    <scope>FUNCTION</scope>
    <scope>CATALYTIC ACTIVITY</scope>
    <scope>COFACTOR</scope>
    <scope>PH OPTIMUM</scope>
    <scope>ACTIVITY REGULATION</scope>
    <scope>INDUCTION</scope>
    <scope>DISRUPTION PHENOTYPE</scope>
    <source>
        <strain>K12 / MC1000 / ATCC 39531</strain>
        <strain>K12 / MG1655 / ATCC 47076</strain>
        <strain>K12 / W3110</strain>
    </source>
</reference>
<reference key="6">
    <citation type="journal article" date="2015" name="J. Bacteriol.">
        <title>Systematic nomenclature for GGDEF and EAL domain-containing cyclic di-GMP turnover proteins of Escherichia coli.</title>
        <authorList>
            <person name="Hengge R."/>
            <person name="Galperin M.Y."/>
            <person name="Ghigo J.M."/>
            <person name="Gomelsky M."/>
            <person name="Green J."/>
            <person name="Hughes K.T."/>
            <person name="Jenal U."/>
            <person name="Landini P."/>
        </authorList>
    </citation>
    <scope>NOMENCLATURE</scope>
</reference>
<organism>
    <name type="scientific">Escherichia coli (strain K12)</name>
    <dbReference type="NCBI Taxonomy" id="83333"/>
    <lineage>
        <taxon>Bacteria</taxon>
        <taxon>Pseudomonadati</taxon>
        <taxon>Pseudomonadota</taxon>
        <taxon>Gammaproteobacteria</taxon>
        <taxon>Enterobacterales</taxon>
        <taxon>Enterobacteriaceae</taxon>
        <taxon>Escherichia</taxon>
    </lineage>
</organism>
<sequence length="747" mass="85608">MKLNATYIKIRDKWWGLPLFLPSLILPIFAHINTFAHISSGEVFLFYLPLALMISMMMFFSWAALPGIALGIFVRKYAELGFYETLSLTANFIIIIILCWGGYRVFTPRRNNVSHGDTRLISQRIFWQIVFPATLFLILFQFAAFVGLLASRENLVGVMPFNLGTLINYQALLVGNLIGVPLCYFIIRVVRNPFYLRSYYSQLKQQVDAKVTKKEFALWLLALGALLLLLCMPLNEKSTIFSTNYTLSLLLPLMMWGAMRYGYKLISLLWAVVLMISIHSYQNYIPIYPGYTTQLTITSSSYLVFSFIVNYMAVLATRQRAVVRRIQRLAYVDPVVHLPNVRALNRALRDAPWSALCYLRIPGMEMLVKNYGIMLRIQYKQKLSHWLSPLLEPGEDVYQLSGNDLALRLNTESHQERITALDSHLKQFRFFWDGMPMQPQIGVSYCYVRSPVNHIYLLLGELNTVAELSIVTNAPENMQRRGAMYLQRELKDKVAMMNRLQQALEHNHFFLMAQPITGMRGDVYHEILLRMKGENDELISPDSFLPVAHEFGLSSSIDMWVIEHTLQFMAENRAKMPAHRFAINLSPTSVCQARFPVEVSQLLAKYQIEAWQLIFEVTESNALTNVKQAQITLQHLQELGCQIAIDDFGTGYASYARLKNVNADLLKIDGSFIRNIVSNSLDYQIVASICHLARMKKMLVVAEYVENEEIREAVLSLGIDYMQGYLIGKPQPLIDTLNEIEPIRESA</sequence>
<evidence type="ECO:0000255" key="1"/>
<evidence type="ECO:0000255" key="2">
    <source>
        <dbReference type="PROSITE-ProRule" id="PRU00074"/>
    </source>
</evidence>
<evidence type="ECO:0000269" key="3">
    <source>
    </source>
</evidence>
<evidence type="ECO:0000269" key="4">
    <source>
    </source>
</evidence>
<evidence type="ECO:0000303" key="5">
    <source>
    </source>
</evidence>
<evidence type="ECO:0000305" key="6"/>
<name>PDEF_ECOLI</name>
<proteinExistence type="evidence at protein level"/>
<dbReference type="EC" id="3.1.4.52" evidence="4"/>
<dbReference type="EMBL" id="U00096">
    <property type="protein sequence ID" value="AAC75556.1"/>
    <property type="molecule type" value="Genomic_DNA"/>
</dbReference>
<dbReference type="EMBL" id="AP009048">
    <property type="protein sequence ID" value="BAA16393.1"/>
    <property type="molecule type" value="Genomic_DNA"/>
</dbReference>
<dbReference type="PIR" id="F65026">
    <property type="entry name" value="F65026"/>
</dbReference>
<dbReference type="RefSeq" id="NP_416998.1">
    <property type="nucleotide sequence ID" value="NC_000913.3"/>
</dbReference>
<dbReference type="RefSeq" id="WP_000772731.1">
    <property type="nucleotide sequence ID" value="NZ_LN832404.1"/>
</dbReference>
<dbReference type="SMR" id="P77172"/>
<dbReference type="BioGRID" id="4260585">
    <property type="interactions" value="25"/>
</dbReference>
<dbReference type="DIP" id="DIP-12038N"/>
<dbReference type="FunCoup" id="P77172">
    <property type="interactions" value="179"/>
</dbReference>
<dbReference type="IntAct" id="P77172">
    <property type="interactions" value="1"/>
</dbReference>
<dbReference type="STRING" id="511145.b2503"/>
<dbReference type="PaxDb" id="511145-b2503"/>
<dbReference type="EnsemblBacteria" id="AAC75556">
    <property type="protein sequence ID" value="AAC75556"/>
    <property type="gene ID" value="b2503"/>
</dbReference>
<dbReference type="GeneID" id="946968"/>
<dbReference type="KEGG" id="ecj:JW2488"/>
<dbReference type="KEGG" id="eco:b2503"/>
<dbReference type="KEGG" id="ecoc:C3026_13880"/>
<dbReference type="PATRIC" id="fig|1411691.4.peg.4235"/>
<dbReference type="EchoBASE" id="EB3954"/>
<dbReference type="eggNOG" id="COG2200">
    <property type="taxonomic scope" value="Bacteria"/>
</dbReference>
<dbReference type="HOGENOM" id="CLU_023566_2_0_6"/>
<dbReference type="InParanoid" id="P77172"/>
<dbReference type="OMA" id="WDGMPLQ"/>
<dbReference type="OrthoDB" id="5900110at2"/>
<dbReference type="PhylomeDB" id="P77172"/>
<dbReference type="BioCyc" id="EcoCyc:G7314-MONOMER"/>
<dbReference type="BioCyc" id="MetaCyc:G7314-MONOMER"/>
<dbReference type="PRO" id="PR:P77172"/>
<dbReference type="Proteomes" id="UP000000625">
    <property type="component" value="Chromosome"/>
</dbReference>
<dbReference type="GO" id="GO:0016020">
    <property type="term" value="C:membrane"/>
    <property type="evidence" value="ECO:0000314"/>
    <property type="project" value="EcoCyc"/>
</dbReference>
<dbReference type="GO" id="GO:0005886">
    <property type="term" value="C:plasma membrane"/>
    <property type="evidence" value="ECO:0000314"/>
    <property type="project" value="EcoCyc"/>
</dbReference>
<dbReference type="GO" id="GO:0071111">
    <property type="term" value="F:cyclic-guanylate-specific phosphodiesterase activity"/>
    <property type="evidence" value="ECO:0000314"/>
    <property type="project" value="EcoCyc"/>
</dbReference>
<dbReference type="GO" id="GO:0000166">
    <property type="term" value="F:nucleotide binding"/>
    <property type="evidence" value="ECO:0007669"/>
    <property type="project" value="UniProtKB-KW"/>
</dbReference>
<dbReference type="GO" id="GO:0042803">
    <property type="term" value="F:protein homodimerization activity"/>
    <property type="evidence" value="ECO:0000314"/>
    <property type="project" value="EcoCyc"/>
</dbReference>
<dbReference type="GO" id="GO:0071454">
    <property type="term" value="P:cellular response to anoxia"/>
    <property type="evidence" value="ECO:0000315"/>
    <property type="project" value="EcoCyc"/>
</dbReference>
<dbReference type="GO" id="GO:0070301">
    <property type="term" value="P:cellular response to hydrogen peroxide"/>
    <property type="evidence" value="ECO:0000315"/>
    <property type="project" value="EcoCyc"/>
</dbReference>
<dbReference type="GO" id="GO:1900190">
    <property type="term" value="P:regulation of single-species biofilm formation"/>
    <property type="evidence" value="ECO:0000315"/>
    <property type="project" value="EcoCyc"/>
</dbReference>
<dbReference type="CDD" id="cd01948">
    <property type="entry name" value="EAL"/>
    <property type="match status" value="1"/>
</dbReference>
<dbReference type="Gene3D" id="3.20.20.450">
    <property type="entry name" value="EAL domain"/>
    <property type="match status" value="1"/>
</dbReference>
<dbReference type="InterPro" id="IPR050706">
    <property type="entry name" value="Cyclic-di-GMP_PDE-like"/>
</dbReference>
<dbReference type="InterPro" id="IPR001633">
    <property type="entry name" value="EAL_dom"/>
</dbReference>
<dbReference type="InterPro" id="IPR035919">
    <property type="entry name" value="EAL_sf"/>
</dbReference>
<dbReference type="InterPro" id="IPR000160">
    <property type="entry name" value="GGDEF_dom"/>
</dbReference>
<dbReference type="InterPro" id="IPR007895">
    <property type="entry name" value="MASE1"/>
</dbReference>
<dbReference type="PANTHER" id="PTHR33121">
    <property type="entry name" value="CYCLIC DI-GMP PHOSPHODIESTERASE PDEF"/>
    <property type="match status" value="1"/>
</dbReference>
<dbReference type="PANTHER" id="PTHR33121:SF64">
    <property type="entry name" value="CYCLIC DI-GMP PHOSPHODIESTERASE PDEF"/>
    <property type="match status" value="1"/>
</dbReference>
<dbReference type="Pfam" id="PF00563">
    <property type="entry name" value="EAL"/>
    <property type="match status" value="1"/>
</dbReference>
<dbReference type="Pfam" id="PF05231">
    <property type="entry name" value="MASE1"/>
    <property type="match status" value="1"/>
</dbReference>
<dbReference type="SMART" id="SM00052">
    <property type="entry name" value="EAL"/>
    <property type="match status" value="1"/>
</dbReference>
<dbReference type="SMART" id="SM00267">
    <property type="entry name" value="GGDEF"/>
    <property type="match status" value="1"/>
</dbReference>
<dbReference type="SUPFAM" id="SSF141868">
    <property type="entry name" value="EAL domain-like"/>
    <property type="match status" value="1"/>
</dbReference>
<dbReference type="PROSITE" id="PS50883">
    <property type="entry name" value="EAL"/>
    <property type="match status" value="1"/>
</dbReference>
<feature type="chain" id="PRO_0000169241" description="Cyclic di-GMP phosphodiesterase PdeF">
    <location>
        <begin position="1"/>
        <end position="747"/>
    </location>
</feature>
<feature type="topological domain" description="Periplasmic" evidence="6">
    <location>
        <begin position="1"/>
        <end position="14"/>
    </location>
</feature>
<feature type="transmembrane region" description="Helical" evidence="1">
    <location>
        <begin position="15"/>
        <end position="36"/>
    </location>
</feature>
<feature type="topological domain" description="Cytoplasmic" evidence="6">
    <location>
        <begin position="37"/>
        <end position="42"/>
    </location>
</feature>
<feature type="transmembrane region" description="Helical" evidence="1">
    <location>
        <begin position="43"/>
        <end position="65"/>
    </location>
</feature>
<feature type="topological domain" description="Periplasmic" evidence="6">
    <location>
        <begin position="66"/>
        <end position="79"/>
    </location>
</feature>
<feature type="transmembrane region" description="Helical" evidence="1">
    <location>
        <begin position="80"/>
        <end position="102"/>
    </location>
</feature>
<feature type="topological domain" description="Cytoplasmic" evidence="6">
    <location>
        <begin position="103"/>
        <end position="128"/>
    </location>
</feature>
<feature type="transmembrane region" description="Helical" evidence="1">
    <location>
        <begin position="129"/>
        <end position="151"/>
    </location>
</feature>
<feature type="topological domain" description="Periplasmic" evidence="6">
    <location>
        <begin position="152"/>
        <end position="165"/>
    </location>
</feature>
<feature type="transmembrane region" description="Helical" evidence="1">
    <location>
        <begin position="166"/>
        <end position="188"/>
    </location>
</feature>
<feature type="topological domain" description="Cytoplasmic" evidence="6">
    <location>
        <begin position="189"/>
        <end position="215"/>
    </location>
</feature>
<feature type="transmembrane region" description="Helical" evidence="1">
    <location>
        <begin position="216"/>
        <end position="235"/>
    </location>
</feature>
<feature type="topological domain" description="Periplasmic" evidence="6">
    <location>
        <begin position="236"/>
        <end position="239"/>
    </location>
</feature>
<feature type="transmembrane region" description="Helical" evidence="1">
    <location>
        <begin position="240"/>
        <end position="259"/>
    </location>
</feature>
<feature type="topological domain" description="Cytoplasmic" evidence="6">
    <location>
        <begin position="260"/>
        <end position="265"/>
    </location>
</feature>
<feature type="transmembrane region" description="Helical" evidence="1">
    <location>
        <begin position="266"/>
        <end position="285"/>
    </location>
</feature>
<feature type="topological domain" description="Periplasmic" evidence="6">
    <location>
        <begin position="286"/>
        <end position="294"/>
    </location>
</feature>
<feature type="transmembrane region" description="Helical" evidence="1">
    <location>
        <begin position="295"/>
        <end position="317"/>
    </location>
</feature>
<feature type="topological domain" description="Cytoplasmic" evidence="3">
    <location>
        <begin position="318"/>
        <end position="747"/>
    </location>
</feature>
<feature type="domain" description="EAL" evidence="2">
    <location>
        <begin position="493"/>
        <end position="744"/>
    </location>
</feature>